<dbReference type="EMBL" id="L16945">
    <property type="status" value="NOT_ANNOTATED_CDS"/>
    <property type="molecule type" value="Unassigned_DNA"/>
</dbReference>
<dbReference type="EMBL" id="U82598">
    <property type="protein sequence ID" value="AAB40765.1"/>
    <property type="molecule type" value="Genomic_DNA"/>
</dbReference>
<dbReference type="EMBL" id="U00096">
    <property type="protein sequence ID" value="AAC73668.1"/>
    <property type="molecule type" value="Genomic_DNA"/>
</dbReference>
<dbReference type="EMBL" id="AP009048">
    <property type="protein sequence ID" value="BAA35201.1"/>
    <property type="molecule type" value="Genomic_DNA"/>
</dbReference>
<dbReference type="PIR" id="E64789">
    <property type="entry name" value="E64789"/>
</dbReference>
<dbReference type="RefSeq" id="NP_415099.1">
    <property type="nucleotide sequence ID" value="NC_000913.3"/>
</dbReference>
<dbReference type="RefSeq" id="WP_001224604.1">
    <property type="nucleotide sequence ID" value="NZ_SSZK01000024.1"/>
</dbReference>
<dbReference type="SMR" id="P37325"/>
<dbReference type="BioGRID" id="4259889">
    <property type="interactions" value="236"/>
</dbReference>
<dbReference type="FunCoup" id="P37325">
    <property type="interactions" value="16"/>
</dbReference>
<dbReference type="IntAct" id="P37325">
    <property type="interactions" value="4"/>
</dbReference>
<dbReference type="STRING" id="511145.b0567"/>
<dbReference type="jPOST" id="P37325"/>
<dbReference type="PaxDb" id="511145-b0567"/>
<dbReference type="EnsemblBacteria" id="AAC73668">
    <property type="protein sequence ID" value="AAC73668"/>
    <property type="gene ID" value="b0567"/>
</dbReference>
<dbReference type="GeneID" id="945186"/>
<dbReference type="KEGG" id="ecj:JW0556"/>
<dbReference type="KEGG" id="eco:b0567"/>
<dbReference type="KEGG" id="ecoc:C3026_02815"/>
<dbReference type="PATRIC" id="fig|511145.12.peg.591"/>
<dbReference type="EchoBASE" id="EB2342"/>
<dbReference type="eggNOG" id="ENOG502Z8FS">
    <property type="taxonomic scope" value="Bacteria"/>
</dbReference>
<dbReference type="HOGENOM" id="CLU_997023_0_0_6"/>
<dbReference type="InParanoid" id="P37325"/>
<dbReference type="OMA" id="LGLYMDP"/>
<dbReference type="OrthoDB" id="7344472at2"/>
<dbReference type="BioCyc" id="EcoCyc:EG12448-MONOMER"/>
<dbReference type="PRO" id="PR:P37325"/>
<dbReference type="Proteomes" id="UP000000625">
    <property type="component" value="Chromosome"/>
</dbReference>
<dbReference type="GO" id="GO:0009279">
    <property type="term" value="C:cell outer membrane"/>
    <property type="evidence" value="ECO:0007005"/>
    <property type="project" value="EcoCyc"/>
</dbReference>
<dbReference type="GO" id="GO:0032940">
    <property type="term" value="P:secretion by cell"/>
    <property type="evidence" value="ECO:0000317"/>
    <property type="project" value="EcoCyc"/>
</dbReference>
<dbReference type="Gene3D" id="3.20.20.80">
    <property type="entry name" value="Glycosidases"/>
    <property type="match status" value="1"/>
</dbReference>
<dbReference type="InterPro" id="IPR027849">
    <property type="entry name" value="DUF4434"/>
</dbReference>
<dbReference type="NCBIfam" id="NF007404">
    <property type="entry name" value="PRK09936.1"/>
    <property type="match status" value="1"/>
</dbReference>
<dbReference type="Pfam" id="PF14488">
    <property type="entry name" value="DUF4434"/>
    <property type="match status" value="1"/>
</dbReference>
<accession>P37325</accession>
<accession>P77641</accession>
<keyword id="KW-1185">Reference proteome</keyword>
<keyword id="KW-0732">Signal</keyword>
<comment type="sequence caution" evidence="2">
    <conflict type="frameshift">
        <sequence resource="EMBL" id="L16945"/>
    </conflict>
</comment>
<name>YBCH_ECOLI</name>
<gene>
    <name type="primary">ybcH</name>
    <name type="ordered locus">b0567</name>
    <name type="ordered locus">JW0556</name>
</gene>
<reference key="1">
    <citation type="journal article" date="1993" name="J. Bacteriol.">
        <title>Two overlapping genes encoding membrane proteins required for bacteriophage N4 adsorption.</title>
        <authorList>
            <person name="Kiino D.R."/>
            <person name="Singer M.S."/>
            <person name="Rothman-Denes L.B."/>
        </authorList>
    </citation>
    <scope>NUCLEOTIDE SEQUENCE [GENOMIC DNA]</scope>
    <source>
        <strain>K12</strain>
    </source>
</reference>
<reference key="2">
    <citation type="journal article" date="1996" name="DNA Res.">
        <title>A 718-kb DNA sequence of the Escherichia coli K-12 genome corresponding to the 12.7-28.0 min region on the linkage map.</title>
        <authorList>
            <person name="Oshima T."/>
            <person name="Aiba H."/>
            <person name="Baba T."/>
            <person name="Fujita K."/>
            <person name="Hayashi K."/>
            <person name="Honjo A."/>
            <person name="Ikemoto K."/>
            <person name="Inada T."/>
            <person name="Itoh T."/>
            <person name="Kajihara M."/>
            <person name="Kanai K."/>
            <person name="Kashimoto K."/>
            <person name="Kimura S."/>
            <person name="Kitagawa M."/>
            <person name="Makino K."/>
            <person name="Masuda S."/>
            <person name="Miki T."/>
            <person name="Mizobuchi K."/>
            <person name="Mori H."/>
            <person name="Motomura K."/>
            <person name="Nakamura Y."/>
            <person name="Nashimoto H."/>
            <person name="Nishio Y."/>
            <person name="Saito N."/>
            <person name="Sampei G."/>
            <person name="Seki Y."/>
            <person name="Tagami H."/>
            <person name="Takemoto K."/>
            <person name="Wada C."/>
            <person name="Yamamoto Y."/>
            <person name="Yano M."/>
            <person name="Horiuchi T."/>
        </authorList>
    </citation>
    <scope>NUCLEOTIDE SEQUENCE [LARGE SCALE GENOMIC DNA]</scope>
    <source>
        <strain>K12 / W3110 / ATCC 27325 / DSM 5911</strain>
    </source>
</reference>
<reference key="3">
    <citation type="submission" date="1997-01" db="EMBL/GenBank/DDBJ databases">
        <title>Sequence of minutes 4-25 of Escherichia coli.</title>
        <authorList>
            <person name="Chung E."/>
            <person name="Allen E."/>
            <person name="Araujo R."/>
            <person name="Aparicio A.M."/>
            <person name="Davis K."/>
            <person name="Duncan M."/>
            <person name="Federspiel N."/>
            <person name="Hyman R."/>
            <person name="Kalman S."/>
            <person name="Komp C."/>
            <person name="Kurdi O."/>
            <person name="Lew H."/>
            <person name="Lin D."/>
            <person name="Namath A."/>
            <person name="Oefner P."/>
            <person name="Roberts D."/>
            <person name="Schramm S."/>
            <person name="Davis R.W."/>
        </authorList>
    </citation>
    <scope>NUCLEOTIDE SEQUENCE [LARGE SCALE GENOMIC DNA]</scope>
    <source>
        <strain>K12 / MG1655 / ATCC 47076</strain>
    </source>
</reference>
<reference key="4">
    <citation type="journal article" date="1997" name="Science">
        <title>The complete genome sequence of Escherichia coli K-12.</title>
        <authorList>
            <person name="Blattner F.R."/>
            <person name="Plunkett G. III"/>
            <person name="Bloch C.A."/>
            <person name="Perna N.T."/>
            <person name="Burland V."/>
            <person name="Riley M."/>
            <person name="Collado-Vides J."/>
            <person name="Glasner J.D."/>
            <person name="Rode C.K."/>
            <person name="Mayhew G.F."/>
            <person name="Gregor J."/>
            <person name="Davis N.W."/>
            <person name="Kirkpatrick H.A."/>
            <person name="Goeden M.A."/>
            <person name="Rose D.J."/>
            <person name="Mau B."/>
            <person name="Shao Y."/>
        </authorList>
    </citation>
    <scope>NUCLEOTIDE SEQUENCE [LARGE SCALE GENOMIC DNA]</scope>
    <source>
        <strain>K12 / MG1655 / ATCC 47076</strain>
    </source>
</reference>
<reference key="5">
    <citation type="journal article" date="2006" name="Mol. Syst. Biol.">
        <title>Highly accurate genome sequences of Escherichia coli K-12 strains MG1655 and W3110.</title>
        <authorList>
            <person name="Hayashi K."/>
            <person name="Morooka N."/>
            <person name="Yamamoto Y."/>
            <person name="Fujita K."/>
            <person name="Isono K."/>
            <person name="Choi S."/>
            <person name="Ohtsubo E."/>
            <person name="Baba T."/>
            <person name="Wanner B.L."/>
            <person name="Mori H."/>
            <person name="Horiuchi T."/>
        </authorList>
    </citation>
    <scope>NUCLEOTIDE SEQUENCE [LARGE SCALE GENOMIC DNA]</scope>
    <source>
        <strain>K12 / W3110 / ATCC 27325 / DSM 5911</strain>
    </source>
</reference>
<evidence type="ECO:0000255" key="1"/>
<evidence type="ECO:0000305" key="2"/>
<organism>
    <name type="scientific">Escherichia coli (strain K12)</name>
    <dbReference type="NCBI Taxonomy" id="83333"/>
    <lineage>
        <taxon>Bacteria</taxon>
        <taxon>Pseudomonadati</taxon>
        <taxon>Pseudomonadota</taxon>
        <taxon>Gammaproteobacteria</taxon>
        <taxon>Enterobacterales</taxon>
        <taxon>Enterobacteriaceae</taxon>
        <taxon>Escherichia</taxon>
    </lineage>
</organism>
<sequence>MRKFIFVLLTLLLVSPFSFAMKGIIWQPQNRDSQVTDTQWQGLMSQLRLQGFDTLVLQWTRYGDAFTQPEQRTLLFKRAAAAQQAGLKLIVGLNADPEFFMHQKQSSAALESYLNRLLAADLQQARLWSAAPGITPDGWYISAEIDDLNWRSEAARQPLLTWLNNAQRLISDVSAKPVYISSFFAGNMSPDGYRQLLEHVKATGVNVWVQDGSGVDKLTAEQRERYLQASADCQSPAPASGVVYELFVAGKGKTFTAKPKPDAEIASLLAKRSSCGKDTLYFSLRYLPVAHGILEY</sequence>
<feature type="signal peptide" evidence="1">
    <location>
        <begin position="1"/>
        <end position="20"/>
    </location>
</feature>
<feature type="chain" id="PRO_0000013797" description="Uncharacterized protein YbcH">
    <location>
        <begin position="21"/>
        <end position="296"/>
    </location>
</feature>
<feature type="sequence conflict" description="In Ref. 1." evidence="2" ref="1">
    <original>A</original>
    <variation>R</variation>
    <location>
        <position position="81"/>
    </location>
</feature>
<protein>
    <recommendedName>
        <fullName>Uncharacterized protein YbcH</fullName>
    </recommendedName>
</protein>
<proteinExistence type="inferred from homology"/>